<evidence type="ECO:0000255" key="1">
    <source>
        <dbReference type="HAMAP-Rule" id="MF_01864"/>
    </source>
</evidence>
<evidence type="ECO:0000255" key="2">
    <source>
        <dbReference type="PROSITE-ProRule" id="PRU01266"/>
    </source>
</evidence>
<evidence type="ECO:0000256" key="3">
    <source>
        <dbReference type="SAM" id="MobiDB-lite"/>
    </source>
</evidence>
<organism>
    <name type="scientific">Staphylococcus aureus (strain Mu50 / ATCC 700699)</name>
    <dbReference type="NCBI Taxonomy" id="158878"/>
    <lineage>
        <taxon>Bacteria</taxon>
        <taxon>Bacillati</taxon>
        <taxon>Bacillota</taxon>
        <taxon>Bacilli</taxon>
        <taxon>Bacillales</taxon>
        <taxon>Staphylococcaceae</taxon>
        <taxon>Staphylococcus</taxon>
    </lineage>
</organism>
<feature type="chain" id="PRO_0000374571" description="tRNA-2-methylthio-N(6)-dimethylallyladenosine synthase">
    <location>
        <begin position="1"/>
        <end position="514"/>
    </location>
</feature>
<feature type="domain" description="MTTase N-terminal" evidence="1">
    <location>
        <begin position="68"/>
        <end position="186"/>
    </location>
</feature>
<feature type="domain" description="Radical SAM core" evidence="2">
    <location>
        <begin position="209"/>
        <end position="440"/>
    </location>
</feature>
<feature type="domain" description="TRAM" evidence="1">
    <location>
        <begin position="442"/>
        <end position="505"/>
    </location>
</feature>
<feature type="region of interest" description="Disordered" evidence="3">
    <location>
        <begin position="1"/>
        <end position="21"/>
    </location>
</feature>
<feature type="binding site" evidence="1">
    <location>
        <position position="77"/>
    </location>
    <ligand>
        <name>[4Fe-4S] cluster</name>
        <dbReference type="ChEBI" id="CHEBI:49883"/>
        <label>1</label>
    </ligand>
</feature>
<feature type="binding site" evidence="1">
    <location>
        <position position="113"/>
    </location>
    <ligand>
        <name>[4Fe-4S] cluster</name>
        <dbReference type="ChEBI" id="CHEBI:49883"/>
        <label>1</label>
    </ligand>
</feature>
<feature type="binding site" evidence="1">
    <location>
        <position position="147"/>
    </location>
    <ligand>
        <name>[4Fe-4S] cluster</name>
        <dbReference type="ChEBI" id="CHEBI:49883"/>
        <label>1</label>
    </ligand>
</feature>
<feature type="binding site" evidence="1">
    <location>
        <position position="223"/>
    </location>
    <ligand>
        <name>[4Fe-4S] cluster</name>
        <dbReference type="ChEBI" id="CHEBI:49883"/>
        <label>2</label>
        <note>4Fe-4S-S-AdoMet</note>
    </ligand>
</feature>
<feature type="binding site" evidence="1">
    <location>
        <position position="227"/>
    </location>
    <ligand>
        <name>[4Fe-4S] cluster</name>
        <dbReference type="ChEBI" id="CHEBI:49883"/>
        <label>2</label>
        <note>4Fe-4S-S-AdoMet</note>
    </ligand>
</feature>
<feature type="binding site" evidence="1">
    <location>
        <position position="230"/>
    </location>
    <ligand>
        <name>[4Fe-4S] cluster</name>
        <dbReference type="ChEBI" id="CHEBI:49883"/>
        <label>2</label>
        <note>4Fe-4S-S-AdoMet</note>
    </ligand>
</feature>
<comment type="function">
    <text evidence="1">Catalyzes the methylthiolation of N6-(dimethylallyl)adenosine (i(6)A), leading to the formation of 2-methylthio-N6-(dimethylallyl)adenosine (ms(2)i(6)A) at position 37 in tRNAs that read codons beginning with uridine.</text>
</comment>
<comment type="catalytic activity">
    <reaction evidence="1">
        <text>N(6)-dimethylallyladenosine(37) in tRNA + (sulfur carrier)-SH + AH2 + 2 S-adenosyl-L-methionine = 2-methylsulfanyl-N(6)-dimethylallyladenosine(37) in tRNA + (sulfur carrier)-H + 5'-deoxyadenosine + L-methionine + A + S-adenosyl-L-homocysteine + 2 H(+)</text>
        <dbReference type="Rhea" id="RHEA:37067"/>
        <dbReference type="Rhea" id="RHEA-COMP:10375"/>
        <dbReference type="Rhea" id="RHEA-COMP:10376"/>
        <dbReference type="Rhea" id="RHEA-COMP:14737"/>
        <dbReference type="Rhea" id="RHEA-COMP:14739"/>
        <dbReference type="ChEBI" id="CHEBI:13193"/>
        <dbReference type="ChEBI" id="CHEBI:15378"/>
        <dbReference type="ChEBI" id="CHEBI:17319"/>
        <dbReference type="ChEBI" id="CHEBI:17499"/>
        <dbReference type="ChEBI" id="CHEBI:29917"/>
        <dbReference type="ChEBI" id="CHEBI:57844"/>
        <dbReference type="ChEBI" id="CHEBI:57856"/>
        <dbReference type="ChEBI" id="CHEBI:59789"/>
        <dbReference type="ChEBI" id="CHEBI:64428"/>
        <dbReference type="ChEBI" id="CHEBI:74415"/>
        <dbReference type="ChEBI" id="CHEBI:74417"/>
        <dbReference type="EC" id="2.8.4.3"/>
    </reaction>
</comment>
<comment type="cofactor">
    <cofactor evidence="1">
        <name>[4Fe-4S] cluster</name>
        <dbReference type="ChEBI" id="CHEBI:49883"/>
    </cofactor>
    <text evidence="1">Binds 2 [4Fe-4S] clusters. One cluster is coordinated with 3 cysteines and an exchangeable S-adenosyl-L-methionine.</text>
</comment>
<comment type="subunit">
    <text evidence="1">Monomer.</text>
</comment>
<comment type="subcellular location">
    <subcellularLocation>
        <location evidence="1">Cytoplasm</location>
    </subcellularLocation>
</comment>
<comment type="similarity">
    <text evidence="1">Belongs to the methylthiotransferase family. MiaB subfamily.</text>
</comment>
<name>MIAB_STAAM</name>
<accession>Q99UI1</accession>
<dbReference type="EC" id="2.8.4.3" evidence="1"/>
<dbReference type="EMBL" id="BA000017">
    <property type="protein sequence ID" value="BAB57454.1"/>
    <property type="molecule type" value="Genomic_DNA"/>
</dbReference>
<dbReference type="RefSeq" id="WP_001001524.1">
    <property type="nucleotide sequence ID" value="NC_002758.2"/>
</dbReference>
<dbReference type="SMR" id="Q99UI1"/>
<dbReference type="KEGG" id="sav:SAV1292"/>
<dbReference type="HOGENOM" id="CLU_018697_2_0_9"/>
<dbReference type="PhylomeDB" id="Q99UI1"/>
<dbReference type="Proteomes" id="UP000002481">
    <property type="component" value="Chromosome"/>
</dbReference>
<dbReference type="GO" id="GO:0005829">
    <property type="term" value="C:cytosol"/>
    <property type="evidence" value="ECO:0007669"/>
    <property type="project" value="TreeGrafter"/>
</dbReference>
<dbReference type="GO" id="GO:0051539">
    <property type="term" value="F:4 iron, 4 sulfur cluster binding"/>
    <property type="evidence" value="ECO:0007669"/>
    <property type="project" value="UniProtKB-UniRule"/>
</dbReference>
<dbReference type="GO" id="GO:0046872">
    <property type="term" value="F:metal ion binding"/>
    <property type="evidence" value="ECO:0007669"/>
    <property type="project" value="UniProtKB-KW"/>
</dbReference>
<dbReference type="GO" id="GO:0035597">
    <property type="term" value="F:N6-isopentenyladenosine methylthiotransferase activity"/>
    <property type="evidence" value="ECO:0007669"/>
    <property type="project" value="TreeGrafter"/>
</dbReference>
<dbReference type="CDD" id="cd01335">
    <property type="entry name" value="Radical_SAM"/>
    <property type="match status" value="1"/>
</dbReference>
<dbReference type="FunFam" id="3.40.50.12160:FF:000006">
    <property type="entry name" value="tRNA-2-methylthio-N(6)-dimethylallyladenosine synthase"/>
    <property type="match status" value="1"/>
</dbReference>
<dbReference type="FunFam" id="3.80.30.20:FF:000001">
    <property type="entry name" value="tRNA-2-methylthio-N(6)-dimethylallyladenosine synthase 2"/>
    <property type="match status" value="1"/>
</dbReference>
<dbReference type="Gene3D" id="3.40.50.12160">
    <property type="entry name" value="Methylthiotransferase, N-terminal domain"/>
    <property type="match status" value="1"/>
</dbReference>
<dbReference type="Gene3D" id="3.80.30.20">
    <property type="entry name" value="tm_1862 like domain"/>
    <property type="match status" value="1"/>
</dbReference>
<dbReference type="HAMAP" id="MF_01864">
    <property type="entry name" value="tRNA_metthiotr_MiaB"/>
    <property type="match status" value="1"/>
</dbReference>
<dbReference type="InterPro" id="IPR006638">
    <property type="entry name" value="Elp3/MiaA/NifB-like_rSAM"/>
</dbReference>
<dbReference type="InterPro" id="IPR005839">
    <property type="entry name" value="Methylthiotransferase"/>
</dbReference>
<dbReference type="InterPro" id="IPR020612">
    <property type="entry name" value="Methylthiotransferase_CS"/>
</dbReference>
<dbReference type="InterPro" id="IPR013848">
    <property type="entry name" value="Methylthiotransferase_N"/>
</dbReference>
<dbReference type="InterPro" id="IPR038135">
    <property type="entry name" value="Methylthiotransferase_N_sf"/>
</dbReference>
<dbReference type="InterPro" id="IPR006463">
    <property type="entry name" value="MiaB_methiolase"/>
</dbReference>
<dbReference type="InterPro" id="IPR007197">
    <property type="entry name" value="rSAM"/>
</dbReference>
<dbReference type="InterPro" id="IPR023404">
    <property type="entry name" value="rSAM_horseshoe"/>
</dbReference>
<dbReference type="InterPro" id="IPR002792">
    <property type="entry name" value="TRAM_dom"/>
</dbReference>
<dbReference type="NCBIfam" id="TIGR01574">
    <property type="entry name" value="miaB-methiolase"/>
    <property type="match status" value="1"/>
</dbReference>
<dbReference type="NCBIfam" id="TIGR00089">
    <property type="entry name" value="MiaB/RimO family radical SAM methylthiotransferase"/>
    <property type="match status" value="1"/>
</dbReference>
<dbReference type="PANTHER" id="PTHR43020">
    <property type="entry name" value="CDK5 REGULATORY SUBUNIT-ASSOCIATED PROTEIN 1"/>
    <property type="match status" value="1"/>
</dbReference>
<dbReference type="PANTHER" id="PTHR43020:SF2">
    <property type="entry name" value="MITOCHONDRIAL TRNA METHYLTHIOTRANSFERASE CDK5RAP1"/>
    <property type="match status" value="1"/>
</dbReference>
<dbReference type="Pfam" id="PF04055">
    <property type="entry name" value="Radical_SAM"/>
    <property type="match status" value="1"/>
</dbReference>
<dbReference type="Pfam" id="PF01938">
    <property type="entry name" value="TRAM"/>
    <property type="match status" value="1"/>
</dbReference>
<dbReference type="Pfam" id="PF00919">
    <property type="entry name" value="UPF0004"/>
    <property type="match status" value="1"/>
</dbReference>
<dbReference type="SFLD" id="SFLDF00273">
    <property type="entry name" value="(dimethylallyl)adenosine_tRNA"/>
    <property type="match status" value="1"/>
</dbReference>
<dbReference type="SFLD" id="SFLDG01082">
    <property type="entry name" value="B12-binding_domain_containing"/>
    <property type="match status" value="1"/>
</dbReference>
<dbReference type="SFLD" id="SFLDS00029">
    <property type="entry name" value="Radical_SAM"/>
    <property type="match status" value="1"/>
</dbReference>
<dbReference type="SMART" id="SM00729">
    <property type="entry name" value="Elp3"/>
    <property type="match status" value="1"/>
</dbReference>
<dbReference type="SUPFAM" id="SSF102114">
    <property type="entry name" value="Radical SAM enzymes"/>
    <property type="match status" value="1"/>
</dbReference>
<dbReference type="PROSITE" id="PS51449">
    <property type="entry name" value="MTTASE_N"/>
    <property type="match status" value="1"/>
</dbReference>
<dbReference type="PROSITE" id="PS01278">
    <property type="entry name" value="MTTASE_RADICAL"/>
    <property type="match status" value="1"/>
</dbReference>
<dbReference type="PROSITE" id="PS51918">
    <property type="entry name" value="RADICAL_SAM"/>
    <property type="match status" value="1"/>
</dbReference>
<dbReference type="PROSITE" id="PS50926">
    <property type="entry name" value="TRAM"/>
    <property type="match status" value="1"/>
</dbReference>
<sequence>MNEEQRKASSVDVLAERDKKAEKDYSKYFEHVYQPPNLKEAKKRGKQEVRYNRDFQIDEKYRGMGNERTFLIKTYGCQMNAHDTEVIAGILEALGYQATTDINTADVILINTCAIRENAENKVFSEIGNLKHLKKERPDILIGVCGCMSQEESVVNKILKSYQNVDMIFGTHNIHHLPEILEEAYLSKAMVVEVWSKEGDVIENLPKVREGNIKAWVNIMYGCDKFCTYCIVPFTRGKERSRRPEDIIDEVRELAREGYKEITLLGQNVNSYGKDLQDIEYDLGDLLQAISKIAIPRVRFTTSHPWDFTDHMIDVISEGGNIVPHIHLPVQSGNNAVLKIMGRKYTRESYLDLVKRIKDRIPNVALTTDIIVGYPNESEEQFEETLTLYDEVGFEHAYTYLYSQRDGTPAAKMKDNVPLNVKKERLQRLNKKVGHYSQIAMSKYEGQTVTVLCEGSSKKDDQVLAGYTDKNKLVNFKAPKEMIGKLVEVRIDEAKQYSLNGSFVKEVEPEMVIQ</sequence>
<keyword id="KW-0004">4Fe-4S</keyword>
<keyword id="KW-0963">Cytoplasm</keyword>
<keyword id="KW-0408">Iron</keyword>
<keyword id="KW-0411">Iron-sulfur</keyword>
<keyword id="KW-0479">Metal-binding</keyword>
<keyword id="KW-0949">S-adenosyl-L-methionine</keyword>
<keyword id="KW-0808">Transferase</keyword>
<keyword id="KW-0819">tRNA processing</keyword>
<reference key="1">
    <citation type="journal article" date="2001" name="Lancet">
        <title>Whole genome sequencing of meticillin-resistant Staphylococcus aureus.</title>
        <authorList>
            <person name="Kuroda M."/>
            <person name="Ohta T."/>
            <person name="Uchiyama I."/>
            <person name="Baba T."/>
            <person name="Yuzawa H."/>
            <person name="Kobayashi I."/>
            <person name="Cui L."/>
            <person name="Oguchi A."/>
            <person name="Aoki K."/>
            <person name="Nagai Y."/>
            <person name="Lian J.-Q."/>
            <person name="Ito T."/>
            <person name="Kanamori M."/>
            <person name="Matsumaru H."/>
            <person name="Maruyama A."/>
            <person name="Murakami H."/>
            <person name="Hosoyama A."/>
            <person name="Mizutani-Ui Y."/>
            <person name="Takahashi N.K."/>
            <person name="Sawano T."/>
            <person name="Inoue R."/>
            <person name="Kaito C."/>
            <person name="Sekimizu K."/>
            <person name="Hirakawa H."/>
            <person name="Kuhara S."/>
            <person name="Goto S."/>
            <person name="Yabuzaki J."/>
            <person name="Kanehisa M."/>
            <person name="Yamashita A."/>
            <person name="Oshima K."/>
            <person name="Furuya K."/>
            <person name="Yoshino C."/>
            <person name="Shiba T."/>
            <person name="Hattori M."/>
            <person name="Ogasawara N."/>
            <person name="Hayashi H."/>
            <person name="Hiramatsu K."/>
        </authorList>
    </citation>
    <scope>NUCLEOTIDE SEQUENCE [LARGE SCALE GENOMIC DNA]</scope>
    <source>
        <strain>Mu50 / ATCC 700699</strain>
    </source>
</reference>
<protein>
    <recommendedName>
        <fullName evidence="1">tRNA-2-methylthio-N(6)-dimethylallyladenosine synthase</fullName>
        <ecNumber evidence="1">2.8.4.3</ecNumber>
    </recommendedName>
    <alternativeName>
        <fullName evidence="1">(Dimethylallyl)adenosine tRNA methylthiotransferase MiaB</fullName>
    </alternativeName>
    <alternativeName>
        <fullName evidence="1">tRNA-i(6)A37 methylthiotransferase</fullName>
    </alternativeName>
</protein>
<gene>
    <name evidence="1" type="primary">miaB</name>
    <name type="ordered locus">SAV1292</name>
</gene>
<proteinExistence type="inferred from homology"/>